<feature type="chain" id="PRO_0000095022" description="tRNA 5-methylaminomethyl-2-thiouridine biosynthesis bifunctional protein MnmC">
    <location>
        <begin position="1"/>
        <end position="654"/>
    </location>
</feature>
<feature type="region of interest" description="tRNA (mnm(5)s(2)U34)-methyltransferase">
    <location>
        <begin position="1"/>
        <end position="236"/>
    </location>
</feature>
<feature type="region of interest" description="FAD-dependent cmnm(5)s(2)U34 oxidoreductase">
    <location>
        <begin position="262"/>
        <end position="654"/>
    </location>
</feature>
<evidence type="ECO:0000255" key="1">
    <source>
        <dbReference type="HAMAP-Rule" id="MF_01102"/>
    </source>
</evidence>
<organism>
    <name type="scientific">Pseudomonas putida (strain ATCC 47054 / DSM 6125 / CFBP 8728 / NCIMB 11950 / KT2440)</name>
    <dbReference type="NCBI Taxonomy" id="160488"/>
    <lineage>
        <taxon>Bacteria</taxon>
        <taxon>Pseudomonadati</taxon>
        <taxon>Pseudomonadota</taxon>
        <taxon>Gammaproteobacteria</taxon>
        <taxon>Pseudomonadales</taxon>
        <taxon>Pseudomonadaceae</taxon>
        <taxon>Pseudomonas</taxon>
    </lineage>
</organism>
<protein>
    <recommendedName>
        <fullName evidence="1">tRNA 5-methylaminomethyl-2-thiouridine biosynthesis bifunctional protein MnmC</fullName>
        <shortName evidence="1">tRNA mnm(5)s(2)U biosynthesis bifunctional protein</shortName>
    </recommendedName>
    <domain>
        <recommendedName>
            <fullName evidence="1">tRNA (mnm(5)s(2)U34)-methyltransferase</fullName>
            <ecNumber evidence="1">2.1.1.61</ecNumber>
        </recommendedName>
    </domain>
    <domain>
        <recommendedName>
            <fullName evidence="1">FAD-dependent cmnm(5)s(2)U34 oxidoreductase</fullName>
            <ecNumber evidence="1">1.5.-.-</ecNumber>
        </recommendedName>
    </domain>
</protein>
<proteinExistence type="inferred from homology"/>
<gene>
    <name evidence="1" type="primary">mnmC</name>
    <name type="ordered locus">PP_1751</name>
</gene>
<reference key="1">
    <citation type="journal article" date="2002" name="Environ. Microbiol.">
        <title>Complete genome sequence and comparative analysis of the metabolically versatile Pseudomonas putida KT2440.</title>
        <authorList>
            <person name="Nelson K.E."/>
            <person name="Weinel C."/>
            <person name="Paulsen I.T."/>
            <person name="Dodson R.J."/>
            <person name="Hilbert H."/>
            <person name="Martins dos Santos V.A.P."/>
            <person name="Fouts D.E."/>
            <person name="Gill S.R."/>
            <person name="Pop M."/>
            <person name="Holmes M."/>
            <person name="Brinkac L.M."/>
            <person name="Beanan M.J."/>
            <person name="DeBoy R.T."/>
            <person name="Daugherty S.C."/>
            <person name="Kolonay J.F."/>
            <person name="Madupu R."/>
            <person name="Nelson W.C."/>
            <person name="White O."/>
            <person name="Peterson J.D."/>
            <person name="Khouri H.M."/>
            <person name="Hance I."/>
            <person name="Chris Lee P."/>
            <person name="Holtzapple E.K."/>
            <person name="Scanlan D."/>
            <person name="Tran K."/>
            <person name="Moazzez A."/>
            <person name="Utterback T.R."/>
            <person name="Rizzo M."/>
            <person name="Lee K."/>
            <person name="Kosack D."/>
            <person name="Moestl D."/>
            <person name="Wedler H."/>
            <person name="Lauber J."/>
            <person name="Stjepandic D."/>
            <person name="Hoheisel J."/>
            <person name="Straetz M."/>
            <person name="Heim S."/>
            <person name="Kiewitz C."/>
            <person name="Eisen J.A."/>
            <person name="Timmis K.N."/>
            <person name="Duesterhoeft A."/>
            <person name="Tuemmler B."/>
            <person name="Fraser C.M."/>
        </authorList>
    </citation>
    <scope>NUCLEOTIDE SEQUENCE [LARGE SCALE GENOMIC DNA]</scope>
    <source>
        <strain>ATCC 47054 / DSM 6125 / CFBP 8728 / NCIMB 11950 / KT2440</strain>
    </source>
</reference>
<comment type="function">
    <text evidence="1">Catalyzes the last two steps in the biosynthesis of 5-methylaminomethyl-2-thiouridine (mnm(5)s(2)U) at the wobble position (U34) in tRNA. Catalyzes the FAD-dependent demodification of cmnm(5)s(2)U34 to nm(5)s(2)U34, followed by the transfer of a methyl group from S-adenosyl-L-methionine to nm(5)s(2)U34, to form mnm(5)s(2)U34.</text>
</comment>
<comment type="catalytic activity">
    <reaction evidence="1">
        <text>5-aminomethyl-2-thiouridine(34) in tRNA + S-adenosyl-L-methionine = 5-methylaminomethyl-2-thiouridine(34) in tRNA + S-adenosyl-L-homocysteine + H(+)</text>
        <dbReference type="Rhea" id="RHEA:19569"/>
        <dbReference type="Rhea" id="RHEA-COMP:10195"/>
        <dbReference type="Rhea" id="RHEA-COMP:10197"/>
        <dbReference type="ChEBI" id="CHEBI:15378"/>
        <dbReference type="ChEBI" id="CHEBI:57856"/>
        <dbReference type="ChEBI" id="CHEBI:59789"/>
        <dbReference type="ChEBI" id="CHEBI:74454"/>
        <dbReference type="ChEBI" id="CHEBI:74455"/>
        <dbReference type="EC" id="2.1.1.61"/>
    </reaction>
</comment>
<comment type="cofactor">
    <cofactor evidence="1">
        <name>FAD</name>
        <dbReference type="ChEBI" id="CHEBI:57692"/>
    </cofactor>
</comment>
<comment type="subcellular location">
    <subcellularLocation>
        <location evidence="1">Cytoplasm</location>
    </subcellularLocation>
</comment>
<comment type="similarity">
    <text evidence="1">In the N-terminal section; belongs to the methyltransferase superfamily. tRNA (mnm(5)s(2)U34)-methyltransferase family.</text>
</comment>
<comment type="similarity">
    <text evidence="1">In the C-terminal section; belongs to the DAO family.</text>
</comment>
<dbReference type="EC" id="2.1.1.61" evidence="1"/>
<dbReference type="EC" id="1.5.-.-" evidence="1"/>
<dbReference type="EMBL" id="AE015451">
    <property type="protein sequence ID" value="AAN67371.1"/>
    <property type="molecule type" value="Genomic_DNA"/>
</dbReference>
<dbReference type="RefSeq" id="NP_743907.1">
    <property type="nucleotide sequence ID" value="NC_002947.4"/>
</dbReference>
<dbReference type="RefSeq" id="WP_010952791.1">
    <property type="nucleotide sequence ID" value="NZ_CP169744.1"/>
</dbReference>
<dbReference type="SMR" id="Q88M24"/>
<dbReference type="STRING" id="160488.PP_1751"/>
<dbReference type="PaxDb" id="160488-PP_1751"/>
<dbReference type="GeneID" id="83681715"/>
<dbReference type="KEGG" id="ppu:PP_1751"/>
<dbReference type="PATRIC" id="fig|160488.4.peg.1846"/>
<dbReference type="eggNOG" id="COG0665">
    <property type="taxonomic scope" value="Bacteria"/>
</dbReference>
<dbReference type="eggNOG" id="COG4121">
    <property type="taxonomic scope" value="Bacteria"/>
</dbReference>
<dbReference type="HOGENOM" id="CLU_022427_1_0_6"/>
<dbReference type="OrthoDB" id="9786494at2"/>
<dbReference type="PhylomeDB" id="Q88M24"/>
<dbReference type="BioCyc" id="PPUT160488:G1G01-1852-MONOMER"/>
<dbReference type="Proteomes" id="UP000000556">
    <property type="component" value="Chromosome"/>
</dbReference>
<dbReference type="GO" id="GO:0005737">
    <property type="term" value="C:cytoplasm"/>
    <property type="evidence" value="ECO:0007669"/>
    <property type="project" value="UniProtKB-SubCell"/>
</dbReference>
<dbReference type="GO" id="GO:0050660">
    <property type="term" value="F:flavin adenine dinucleotide binding"/>
    <property type="evidence" value="ECO:0007669"/>
    <property type="project" value="UniProtKB-UniRule"/>
</dbReference>
<dbReference type="GO" id="GO:0016645">
    <property type="term" value="F:oxidoreductase activity, acting on the CH-NH group of donors"/>
    <property type="evidence" value="ECO:0007669"/>
    <property type="project" value="InterPro"/>
</dbReference>
<dbReference type="GO" id="GO:0004808">
    <property type="term" value="F:tRNA (5-methylaminomethyl-2-thiouridylate)(34)-methyltransferase activity"/>
    <property type="evidence" value="ECO:0007669"/>
    <property type="project" value="UniProtKB-EC"/>
</dbReference>
<dbReference type="GO" id="GO:0032259">
    <property type="term" value="P:methylation"/>
    <property type="evidence" value="ECO:0007669"/>
    <property type="project" value="UniProtKB-KW"/>
</dbReference>
<dbReference type="GO" id="GO:0002098">
    <property type="term" value="P:tRNA wobble uridine modification"/>
    <property type="evidence" value="ECO:0007669"/>
    <property type="project" value="TreeGrafter"/>
</dbReference>
<dbReference type="Gene3D" id="3.30.9.10">
    <property type="entry name" value="D-Amino Acid Oxidase, subunit A, domain 2"/>
    <property type="match status" value="1"/>
</dbReference>
<dbReference type="Gene3D" id="3.50.50.60">
    <property type="entry name" value="FAD/NAD(P)-binding domain"/>
    <property type="match status" value="1"/>
</dbReference>
<dbReference type="Gene3D" id="3.40.50.150">
    <property type="entry name" value="Vaccinia Virus protein VP39"/>
    <property type="match status" value="1"/>
</dbReference>
<dbReference type="HAMAP" id="MF_01102">
    <property type="entry name" value="MnmC"/>
    <property type="match status" value="1"/>
</dbReference>
<dbReference type="InterPro" id="IPR006076">
    <property type="entry name" value="FAD-dep_OxRdtase"/>
</dbReference>
<dbReference type="InterPro" id="IPR036188">
    <property type="entry name" value="FAD/NAD-bd_sf"/>
</dbReference>
<dbReference type="InterPro" id="IPR008471">
    <property type="entry name" value="MnmC-like_methylTransf"/>
</dbReference>
<dbReference type="InterPro" id="IPR029063">
    <property type="entry name" value="SAM-dependent_MTases_sf"/>
</dbReference>
<dbReference type="InterPro" id="IPR023032">
    <property type="entry name" value="tRNA_MAMT_biosynth_bifunc_MnmC"/>
</dbReference>
<dbReference type="InterPro" id="IPR047785">
    <property type="entry name" value="tRNA_MNMC2"/>
</dbReference>
<dbReference type="InterPro" id="IPR017610">
    <property type="entry name" value="tRNA_S-uridine_synth_MnmC_C"/>
</dbReference>
<dbReference type="NCBIfam" id="TIGR03197">
    <property type="entry name" value="MnmC_Cterm"/>
    <property type="match status" value="1"/>
</dbReference>
<dbReference type="NCBIfam" id="NF002481">
    <property type="entry name" value="PRK01747.1-2"/>
    <property type="match status" value="1"/>
</dbReference>
<dbReference type="NCBIfam" id="NF033855">
    <property type="entry name" value="tRNA_MNMC2"/>
    <property type="match status" value="1"/>
</dbReference>
<dbReference type="PANTHER" id="PTHR13847">
    <property type="entry name" value="SARCOSINE DEHYDROGENASE-RELATED"/>
    <property type="match status" value="1"/>
</dbReference>
<dbReference type="PANTHER" id="PTHR13847:SF283">
    <property type="entry name" value="TRNA 5-METHYLAMINOMETHYL-2-THIOURIDINE BIOSYNTHESIS BIFUNCTIONAL PROTEIN MNMC"/>
    <property type="match status" value="1"/>
</dbReference>
<dbReference type="Pfam" id="PF01266">
    <property type="entry name" value="DAO"/>
    <property type="match status" value="1"/>
</dbReference>
<dbReference type="Pfam" id="PF05430">
    <property type="entry name" value="Methyltransf_30"/>
    <property type="match status" value="1"/>
</dbReference>
<dbReference type="SUPFAM" id="SSF51905">
    <property type="entry name" value="FAD/NAD(P)-binding domain"/>
    <property type="match status" value="1"/>
</dbReference>
<dbReference type="SUPFAM" id="SSF53335">
    <property type="entry name" value="S-adenosyl-L-methionine-dependent methyltransferases"/>
    <property type="match status" value="1"/>
</dbReference>
<name>MNMC_PSEPK</name>
<sequence>MPTLLQHAQIDWDDQGRPHSRHYDDVYFAVNEGIEETKHVFLGQTRLAERFANLAPHACTVIGETGFGTGMNFFCAWQLFDQHAHSDARLHFVSVEKYPLDHADMARAVRLWPELAAYTEPLLEQYVAVHPGFQQFTFTGGRVTLTLLIGDVLEQLPQLDAQIDVWFLDGFAPAKNPDMWTPELFAQLARLSHPGTVLGTFTTTGWVRRSLVEAGFAMKKVPGIGKKWEVMSGAYVGPLPGPCAPWYARPAVTQGPREALVIGAGLAGSSSAASLARRGWQVTVLERHEAPAQEASGNPQGVLYLKLSAHGTALSQMILSGFGYTRRQLQRLQRGRDWDACGVLQLAFDSKEAERQGKLAAAFDPGLLHCLARAEAEAIAGVALPGGGLFYPEGGWVHPPALCQQQLQHPGIHLVTHQEVLELRKVDEQWQAWAGDQLLARAPVVVLAGAADVLRFEPCAQLPLKRIRGQITRLPATVSSQALRTVVCAEGYVAPPREGEHTLGASFDFHSEDLAPTVAEHQGNLALLDEISVDLAQRLAVAELDPEQLQGRAAFRCTSPDYLPIVGPIADAQAFAEAYAVLGRDARQVPDVPCPWLGGLYVNSGHGSRGLITAPLSGELVAAWVCGEPLPLPRAVAQACHPNRFGLRRLIRGK</sequence>
<keyword id="KW-0963">Cytoplasm</keyword>
<keyword id="KW-0274">FAD</keyword>
<keyword id="KW-0285">Flavoprotein</keyword>
<keyword id="KW-0489">Methyltransferase</keyword>
<keyword id="KW-0511">Multifunctional enzyme</keyword>
<keyword id="KW-0560">Oxidoreductase</keyword>
<keyword id="KW-1185">Reference proteome</keyword>
<keyword id="KW-0949">S-adenosyl-L-methionine</keyword>
<keyword id="KW-0808">Transferase</keyword>
<keyword id="KW-0819">tRNA processing</keyword>
<accession>Q88M24</accession>